<reference key="1">
    <citation type="journal article" date="2003" name="Nature">
        <title>The DNA sequence of human chromosome 7.</title>
        <authorList>
            <person name="Hillier L.W."/>
            <person name="Fulton R.S."/>
            <person name="Fulton L.A."/>
            <person name="Graves T.A."/>
            <person name="Pepin K.H."/>
            <person name="Wagner-McPherson C."/>
            <person name="Layman D."/>
            <person name="Maas J."/>
            <person name="Jaeger S."/>
            <person name="Walker R."/>
            <person name="Wylie K."/>
            <person name="Sekhon M."/>
            <person name="Becker M.C."/>
            <person name="O'Laughlin M.D."/>
            <person name="Schaller M.E."/>
            <person name="Fewell G.A."/>
            <person name="Delehaunty K.D."/>
            <person name="Miner T.L."/>
            <person name="Nash W.E."/>
            <person name="Cordes M."/>
            <person name="Du H."/>
            <person name="Sun H."/>
            <person name="Edwards J."/>
            <person name="Bradshaw-Cordum H."/>
            <person name="Ali J."/>
            <person name="Andrews S."/>
            <person name="Isak A."/>
            <person name="Vanbrunt A."/>
            <person name="Nguyen C."/>
            <person name="Du F."/>
            <person name="Lamar B."/>
            <person name="Courtney L."/>
            <person name="Kalicki J."/>
            <person name="Ozersky P."/>
            <person name="Bielicki L."/>
            <person name="Scott K."/>
            <person name="Holmes A."/>
            <person name="Harkins R."/>
            <person name="Harris A."/>
            <person name="Strong C.M."/>
            <person name="Hou S."/>
            <person name="Tomlinson C."/>
            <person name="Dauphin-Kohlberg S."/>
            <person name="Kozlowicz-Reilly A."/>
            <person name="Leonard S."/>
            <person name="Rohlfing T."/>
            <person name="Rock S.M."/>
            <person name="Tin-Wollam A.-M."/>
            <person name="Abbott A."/>
            <person name="Minx P."/>
            <person name="Maupin R."/>
            <person name="Strowmatt C."/>
            <person name="Latreille P."/>
            <person name="Miller N."/>
            <person name="Johnson D."/>
            <person name="Murray J."/>
            <person name="Woessner J.P."/>
            <person name="Wendl M.C."/>
            <person name="Yang S.-P."/>
            <person name="Schultz B.R."/>
            <person name="Wallis J.W."/>
            <person name="Spieth J."/>
            <person name="Bieri T.A."/>
            <person name="Nelson J.O."/>
            <person name="Berkowicz N."/>
            <person name="Wohldmann P.E."/>
            <person name="Cook L.L."/>
            <person name="Hickenbotham M.T."/>
            <person name="Eldred J."/>
            <person name="Williams D."/>
            <person name="Bedell J.A."/>
            <person name="Mardis E.R."/>
            <person name="Clifton S.W."/>
            <person name="Chissoe S.L."/>
            <person name="Marra M.A."/>
            <person name="Raymond C."/>
            <person name="Haugen E."/>
            <person name="Gillett W."/>
            <person name="Zhou Y."/>
            <person name="James R."/>
            <person name="Phelps K."/>
            <person name="Iadanoto S."/>
            <person name="Bubb K."/>
            <person name="Simms E."/>
            <person name="Levy R."/>
            <person name="Clendenning J."/>
            <person name="Kaul R."/>
            <person name="Kent W.J."/>
            <person name="Furey T.S."/>
            <person name="Baertsch R.A."/>
            <person name="Brent M.R."/>
            <person name="Keibler E."/>
            <person name="Flicek P."/>
            <person name="Bork P."/>
            <person name="Suyama M."/>
            <person name="Bailey J.A."/>
            <person name="Portnoy M.E."/>
            <person name="Torrents D."/>
            <person name="Chinwalla A.T."/>
            <person name="Gish W.R."/>
            <person name="Eddy S.R."/>
            <person name="McPherson J.D."/>
            <person name="Olson M.V."/>
            <person name="Eichler E.E."/>
            <person name="Green E.D."/>
            <person name="Waterston R.H."/>
            <person name="Wilson R.K."/>
        </authorList>
    </citation>
    <scope>NUCLEOTIDE SEQUENCE [LARGE SCALE GENOMIC DNA]</scope>
</reference>
<reference key="2">
    <citation type="journal article" date="2003" name="Science">
        <title>Human chromosome 7: DNA sequence and biology.</title>
        <authorList>
            <person name="Scherer S.W."/>
            <person name="Cheung J."/>
            <person name="MacDonald J.R."/>
            <person name="Osborne L.R."/>
            <person name="Nakabayashi K."/>
            <person name="Herbrick J.-A."/>
            <person name="Carson A.R."/>
            <person name="Parker-Katiraee L."/>
            <person name="Skaug J."/>
            <person name="Khaja R."/>
            <person name="Zhang J."/>
            <person name="Hudek A.K."/>
            <person name="Li M."/>
            <person name="Haddad M."/>
            <person name="Duggan G.E."/>
            <person name="Fernandez B.A."/>
            <person name="Kanematsu E."/>
            <person name="Gentles S."/>
            <person name="Christopoulos C.C."/>
            <person name="Choufani S."/>
            <person name="Kwasnicka D."/>
            <person name="Zheng X.H."/>
            <person name="Lai Z."/>
            <person name="Nusskern D.R."/>
            <person name="Zhang Q."/>
            <person name="Gu Z."/>
            <person name="Lu F."/>
            <person name="Zeesman S."/>
            <person name="Nowaczyk M.J."/>
            <person name="Teshima I."/>
            <person name="Chitayat D."/>
            <person name="Shuman C."/>
            <person name="Weksberg R."/>
            <person name="Zackai E.H."/>
            <person name="Grebe T.A."/>
            <person name="Cox S.R."/>
            <person name="Kirkpatrick S.J."/>
            <person name="Rahman N."/>
            <person name="Friedman J.M."/>
            <person name="Heng H.H.Q."/>
            <person name="Pelicci P.G."/>
            <person name="Lo-Coco F."/>
            <person name="Belloni E."/>
            <person name="Shaffer L.G."/>
            <person name="Pober B."/>
            <person name="Morton C.C."/>
            <person name="Gusella J.F."/>
            <person name="Bruns G.A.P."/>
            <person name="Korf B.R."/>
            <person name="Quade B.J."/>
            <person name="Ligon A.H."/>
            <person name="Ferguson H."/>
            <person name="Higgins A.W."/>
            <person name="Leach N.T."/>
            <person name="Herrick S.R."/>
            <person name="Lemyre E."/>
            <person name="Farra C.G."/>
            <person name="Kim H.-G."/>
            <person name="Summers A.M."/>
            <person name="Gripp K.W."/>
            <person name="Roberts W."/>
            <person name="Szatmari P."/>
            <person name="Winsor E.J.T."/>
            <person name="Grzeschik K.-H."/>
            <person name="Teebi A."/>
            <person name="Minassian B.A."/>
            <person name="Kere J."/>
            <person name="Armengol L."/>
            <person name="Pujana M.A."/>
            <person name="Estivill X."/>
            <person name="Wilson M.D."/>
            <person name="Koop B.F."/>
            <person name="Tosi S."/>
            <person name="Moore G.E."/>
            <person name="Boright A.P."/>
            <person name="Zlotorynski E."/>
            <person name="Kerem B."/>
            <person name="Kroisel P.M."/>
            <person name="Petek E."/>
            <person name="Oscier D.G."/>
            <person name="Mould S.J."/>
            <person name="Doehner H."/>
            <person name="Doehner K."/>
            <person name="Rommens J.M."/>
            <person name="Vincent J.B."/>
            <person name="Venter J.C."/>
            <person name="Li P.W."/>
            <person name="Mural R.J."/>
            <person name="Adams M.D."/>
            <person name="Tsui L.-C."/>
        </authorList>
    </citation>
    <scope>NUCLEOTIDE SEQUENCE [LARGE SCALE GENOMIC DNA]</scope>
</reference>
<reference key="3">
    <citation type="submission" date="2005-07" db="EMBL/GenBank/DDBJ databases">
        <authorList>
            <person name="Mural R.J."/>
            <person name="Istrail S."/>
            <person name="Sutton G.G."/>
            <person name="Florea L."/>
            <person name="Halpern A.L."/>
            <person name="Mobarry C.M."/>
            <person name="Lippert R."/>
            <person name="Walenz B."/>
            <person name="Shatkay H."/>
            <person name="Dew I."/>
            <person name="Miller J.R."/>
            <person name="Flanigan M.J."/>
            <person name="Edwards N.J."/>
            <person name="Bolanos R."/>
            <person name="Fasulo D."/>
            <person name="Halldorsson B.V."/>
            <person name="Hannenhalli S."/>
            <person name="Turner R."/>
            <person name="Yooseph S."/>
            <person name="Lu F."/>
            <person name="Nusskern D.R."/>
            <person name="Shue B.C."/>
            <person name="Zheng X.H."/>
            <person name="Zhong F."/>
            <person name="Delcher A.L."/>
            <person name="Huson D.H."/>
            <person name="Kravitz S.A."/>
            <person name="Mouchard L."/>
            <person name="Reinert K."/>
            <person name="Remington K.A."/>
            <person name="Clark A.G."/>
            <person name="Waterman M.S."/>
            <person name="Eichler E.E."/>
            <person name="Adams M.D."/>
            <person name="Hunkapiller M.W."/>
            <person name="Myers E.W."/>
            <person name="Venter J.C."/>
        </authorList>
    </citation>
    <scope>NUCLEOTIDE SEQUENCE [LARGE SCALE GENOMIC DNA]</scope>
</reference>
<reference key="4">
    <citation type="journal article" date="2004" name="Genome Res.">
        <title>The status, quality, and expansion of the NIH full-length cDNA project: the Mammalian Gene Collection (MGC).</title>
        <authorList>
            <consortium name="The MGC Project Team"/>
        </authorList>
    </citation>
    <scope>NUCLEOTIDE SEQUENCE [LARGE SCALE MRNA]</scope>
    <source>
        <tissue>Adrenal cortex</tissue>
        <tissue>Uterus</tissue>
    </source>
</reference>
<reference key="5">
    <citation type="journal article" date="2006" name="Mol. Cell">
        <title>Cooperation of multiple chaperones required for the assembly of mammalian 20S proteasomes.</title>
        <authorList>
            <person name="Hirano Y."/>
            <person name="Hayashi H."/>
            <person name="Iemura S."/>
            <person name="Hendil K.B."/>
            <person name="Niwa S."/>
            <person name="Kishimoto T."/>
            <person name="Kasahara M."/>
            <person name="Natsume T."/>
            <person name="Tanaka K."/>
            <person name="Murata S."/>
        </authorList>
    </citation>
    <scope>IDENTIFICATION</scope>
    <scope>FUNCTION</scope>
    <scope>INTERACTION WITH THE PROTEASOME</scope>
</reference>
<reference key="6">
    <citation type="journal article" date="2009" name="Anal. Chem.">
        <title>Lys-N and trypsin cover complementary parts of the phosphoproteome in a refined SCX-based approach.</title>
        <authorList>
            <person name="Gauci S."/>
            <person name="Helbig A.O."/>
            <person name="Slijper M."/>
            <person name="Krijgsveld J."/>
            <person name="Heck A.J."/>
            <person name="Mohammed S."/>
        </authorList>
    </citation>
    <scope>ACETYLATION [LARGE SCALE ANALYSIS] AT MET-1</scope>
    <scope>IDENTIFICATION BY MASS SPECTROMETRY [LARGE SCALE ANALYSIS]</scope>
</reference>
<reference key="7">
    <citation type="journal article" date="2011" name="BMC Syst. Biol.">
        <title>Initial characterization of the human central proteome.</title>
        <authorList>
            <person name="Burkard T.R."/>
            <person name="Planyavsky M."/>
            <person name="Kaupe I."/>
            <person name="Breitwieser F.P."/>
            <person name="Buerckstuemmer T."/>
            <person name="Bennett K.L."/>
            <person name="Superti-Furga G."/>
            <person name="Colinge J."/>
        </authorList>
    </citation>
    <scope>IDENTIFICATION BY MASS SPECTROMETRY [LARGE SCALE ANALYSIS]</scope>
</reference>
<reference key="8">
    <citation type="journal article" date="2012" name="Mol. Cell. Proteomics">
        <title>Comparative large-scale characterisation of plant vs. mammal proteins reveals similar and idiosyncratic N-alpha acetylation features.</title>
        <authorList>
            <person name="Bienvenut W.V."/>
            <person name="Sumpton D."/>
            <person name="Martinez A."/>
            <person name="Lilla S."/>
            <person name="Espagne C."/>
            <person name="Meinnel T."/>
            <person name="Giglione C."/>
        </authorList>
    </citation>
    <scope>ACETYLATION [LARGE SCALE ANALYSIS] AT MET-1</scope>
    <scope>IDENTIFICATION BY MASS SPECTROMETRY [LARGE SCALE ANALYSIS]</scope>
</reference>
<reference key="9">
    <citation type="journal article" date="2013" name="Annu. Rev. Biochem.">
        <title>Molecular architecture and assembly of the eukaryotic proteasome.</title>
        <authorList>
            <person name="Tomko R.J. Jr."/>
            <person name="Hochstrasser M."/>
        </authorList>
    </citation>
    <scope>NOMENCLATURE</scope>
</reference>
<reference key="10">
    <citation type="journal article" date="2008" name="Nat. Struct. Mol. Biol.">
        <title>Crystal structure of a chaperone complex that contributes to the assembly of yeast 20S proteasomes.</title>
        <authorList>
            <person name="Yashiroda H."/>
            <person name="Mizushima T."/>
            <person name="Okamoto K."/>
            <person name="Kameyama T."/>
            <person name="Hayashi H."/>
            <person name="Kishimoto T."/>
            <person name="Niwa S."/>
            <person name="Kasahara M."/>
            <person name="Kurimoto E."/>
            <person name="Sakata E."/>
            <person name="Takagi K."/>
            <person name="Suzuki A."/>
            <person name="Hirano Y."/>
            <person name="Murata S."/>
            <person name="Kato K."/>
            <person name="Yamane T."/>
            <person name="Tanaka K."/>
        </authorList>
    </citation>
    <scope>X-RAY CRYSTALLOGRAPHY (2.0 ANGSTROMS)</scope>
    <scope>SUBUNIT</scope>
</reference>
<organism>
    <name type="scientific">Homo sapiens</name>
    <name type="common">Human</name>
    <dbReference type="NCBI Taxonomy" id="9606"/>
    <lineage>
        <taxon>Eukaryota</taxon>
        <taxon>Metazoa</taxon>
        <taxon>Chordata</taxon>
        <taxon>Craniata</taxon>
        <taxon>Vertebrata</taxon>
        <taxon>Euteleostomi</taxon>
        <taxon>Mammalia</taxon>
        <taxon>Eutheria</taxon>
        <taxon>Euarchontoglires</taxon>
        <taxon>Primates</taxon>
        <taxon>Haplorrhini</taxon>
        <taxon>Catarrhini</taxon>
        <taxon>Hominidae</taxon>
        <taxon>Homo</taxon>
    </lineage>
</organism>
<sequence length="122" mass="13104">MEDTPLVISKQKTEVVCGVPTQVVCTAFSSHILVVVTQFGKMGTLVSLEPSSVASDVSKPVLTTKVLLGQDEPLIHVFAKNLVAFVSQEAGNRAVLLAVAVKDKSMEGLKALREVIRVCQVW</sequence>
<accession>Q9BT73</accession>
<accession>A4D216</accession>
<accession>A8MPW2</accession>
<gene>
    <name evidence="5" type="primary">PSMG3</name>
    <name type="synonym">C7orf48</name>
    <name type="synonym">PAC3</name>
</gene>
<protein>
    <recommendedName>
        <fullName evidence="4">Proteasome assembly chaperone 3</fullName>
        <shortName evidence="3">PAC-3</shortName>
        <shortName>hPAC3</shortName>
    </recommendedName>
    <alternativeName>
        <fullName evidence="3">Proteasome chaperone homolog 3</fullName>
        <shortName evidence="3">Pba3</shortName>
    </alternativeName>
</protein>
<keyword id="KW-0002">3D-structure</keyword>
<keyword id="KW-0007">Acetylation</keyword>
<keyword id="KW-0143">Chaperone</keyword>
<keyword id="KW-1267">Proteomics identification</keyword>
<keyword id="KW-1185">Reference proteome</keyword>
<evidence type="ECO:0000269" key="1">
    <source>
    </source>
</evidence>
<evidence type="ECO:0000269" key="2">
    <source>
    </source>
</evidence>
<evidence type="ECO:0000303" key="3">
    <source>
    </source>
</evidence>
<evidence type="ECO:0000305" key="4"/>
<evidence type="ECO:0000312" key="5">
    <source>
        <dbReference type="HGNC" id="HGNC:22420"/>
    </source>
</evidence>
<evidence type="ECO:0007744" key="6">
    <source>
    </source>
</evidence>
<evidence type="ECO:0007744" key="7">
    <source>
    </source>
</evidence>
<evidence type="ECO:0007829" key="8">
    <source>
        <dbReference type="PDB" id="2Z5E"/>
    </source>
</evidence>
<evidence type="ECO:0007829" key="9">
    <source>
        <dbReference type="PDB" id="6JPT"/>
    </source>
</evidence>
<proteinExistence type="evidence at protein level"/>
<feature type="chain" id="PRO_0000271358" description="Proteasome assembly chaperone 3">
    <location>
        <begin position="1"/>
        <end position="122"/>
    </location>
</feature>
<feature type="modified residue" description="N-acetylmethionine" evidence="6 7">
    <location>
        <position position="1"/>
    </location>
</feature>
<feature type="strand" evidence="9">
    <location>
        <begin position="6"/>
        <end position="16"/>
    </location>
</feature>
<feature type="strand" evidence="9">
    <location>
        <begin position="19"/>
        <end position="27"/>
    </location>
</feature>
<feature type="strand" evidence="9">
    <location>
        <begin position="29"/>
        <end position="38"/>
    </location>
</feature>
<feature type="strand" evidence="9">
    <location>
        <begin position="44"/>
        <end position="51"/>
    </location>
</feature>
<feature type="strand" evidence="8">
    <location>
        <begin position="56"/>
        <end position="59"/>
    </location>
</feature>
<feature type="strand" evidence="9">
    <location>
        <begin position="61"/>
        <end position="69"/>
    </location>
</feature>
<feature type="helix" evidence="9">
    <location>
        <begin position="73"/>
        <end position="89"/>
    </location>
</feature>
<feature type="strand" evidence="9">
    <location>
        <begin position="94"/>
        <end position="100"/>
    </location>
</feature>
<feature type="helix" evidence="9">
    <location>
        <begin position="106"/>
        <end position="118"/>
    </location>
</feature>
<name>PSMG3_HUMAN</name>
<dbReference type="EMBL" id="AC093734">
    <property type="protein sequence ID" value="AAP21867.1"/>
    <property type="molecule type" value="Genomic_DNA"/>
</dbReference>
<dbReference type="EMBL" id="CH236953">
    <property type="protein sequence ID" value="EAL23945.1"/>
    <property type="molecule type" value="Genomic_DNA"/>
</dbReference>
<dbReference type="EMBL" id="CH471144">
    <property type="protein sequence ID" value="EAW87212.1"/>
    <property type="molecule type" value="Genomic_DNA"/>
</dbReference>
<dbReference type="EMBL" id="BC004308">
    <property type="protein sequence ID" value="AAH04308.1"/>
    <property type="molecule type" value="mRNA"/>
</dbReference>
<dbReference type="EMBL" id="BC027171">
    <property type="protein sequence ID" value="AAH27171.1"/>
    <property type="molecule type" value="mRNA"/>
</dbReference>
<dbReference type="EMBL" id="BR000337">
    <property type="protein sequence ID" value="FAA00325.1"/>
    <property type="molecule type" value="mRNA"/>
</dbReference>
<dbReference type="CCDS" id="CCDS5327.1"/>
<dbReference type="RefSeq" id="NP_001127812.1">
    <property type="nucleotide sequence ID" value="NM_001134340.2"/>
</dbReference>
<dbReference type="RefSeq" id="NP_115678.1">
    <property type="nucleotide sequence ID" value="NM_032302.4"/>
</dbReference>
<dbReference type="PDB" id="2Z5E">
    <property type="method" value="X-ray"/>
    <property type="resolution" value="2.00 A"/>
    <property type="chains" value="A/B=1-122"/>
</dbReference>
<dbReference type="PDB" id="6JPT">
    <property type="method" value="X-ray"/>
    <property type="resolution" value="0.96 A"/>
    <property type="chains" value="A=1-122"/>
</dbReference>
<dbReference type="PDB" id="8QYJ">
    <property type="method" value="EM"/>
    <property type="resolution" value="2.73 A"/>
    <property type="chains" value="L=1-122"/>
</dbReference>
<dbReference type="PDB" id="8TM3">
    <property type="method" value="EM"/>
    <property type="resolution" value="3.00 A"/>
    <property type="chains" value="i=1-122"/>
</dbReference>
<dbReference type="PDBsum" id="2Z5E"/>
<dbReference type="PDBsum" id="6JPT"/>
<dbReference type="PDBsum" id="8QYJ"/>
<dbReference type="PDBsum" id="8TM3"/>
<dbReference type="EMDB" id="EMD-18755"/>
<dbReference type="EMDB" id="EMD-41377"/>
<dbReference type="SMR" id="Q9BT73"/>
<dbReference type="BioGRID" id="123989">
    <property type="interactions" value="124"/>
</dbReference>
<dbReference type="ComplexPortal" id="CPX-8174">
    <property type="entry name" value="PSMG3-PSMG4 proteasomal chaperone complex"/>
</dbReference>
<dbReference type="CORUM" id="Q9BT73"/>
<dbReference type="FunCoup" id="Q9BT73">
    <property type="interactions" value="482"/>
</dbReference>
<dbReference type="IntAct" id="Q9BT73">
    <property type="interactions" value="84"/>
</dbReference>
<dbReference type="MINT" id="Q9BT73"/>
<dbReference type="STRING" id="9606.ENSP00000288607"/>
<dbReference type="BindingDB" id="Q9BT73"/>
<dbReference type="ChEMBL" id="CHEMBL1075137"/>
<dbReference type="GlyGen" id="Q9BT73">
    <property type="glycosylation" value="1 site, 1 O-linked glycan (1 site)"/>
</dbReference>
<dbReference type="iPTMnet" id="Q9BT73"/>
<dbReference type="PhosphoSitePlus" id="Q9BT73"/>
<dbReference type="BioMuta" id="PSMG3"/>
<dbReference type="DMDM" id="74733099"/>
<dbReference type="jPOST" id="Q9BT73"/>
<dbReference type="MassIVE" id="Q9BT73"/>
<dbReference type="PaxDb" id="9606-ENSP00000288607"/>
<dbReference type="PeptideAtlas" id="Q9BT73"/>
<dbReference type="ProteomicsDB" id="78955"/>
<dbReference type="Pumba" id="Q9BT73"/>
<dbReference type="TopDownProteomics" id="Q9BT73"/>
<dbReference type="Antibodypedia" id="10998">
    <property type="antibodies" value="60 antibodies from 17 providers"/>
</dbReference>
<dbReference type="DNASU" id="84262"/>
<dbReference type="Ensembl" id="ENST00000252329.3">
    <property type="protein sequence ID" value="ENSP00000252329.3"/>
    <property type="gene ID" value="ENSG00000157778.9"/>
</dbReference>
<dbReference type="Ensembl" id="ENST00000288607.3">
    <property type="protein sequence ID" value="ENSP00000288607.2"/>
    <property type="gene ID" value="ENSG00000157778.9"/>
</dbReference>
<dbReference type="Ensembl" id="ENST00000404674.7">
    <property type="protein sequence ID" value="ENSP00000384799.3"/>
    <property type="gene ID" value="ENSG00000157778.9"/>
</dbReference>
<dbReference type="GeneID" id="84262"/>
<dbReference type="KEGG" id="hsa:84262"/>
<dbReference type="MANE-Select" id="ENST00000288607.3">
    <property type="protein sequence ID" value="ENSP00000288607.2"/>
    <property type="RefSeq nucleotide sequence ID" value="NM_032302.4"/>
    <property type="RefSeq protein sequence ID" value="NP_115678.1"/>
</dbReference>
<dbReference type="UCSC" id="uc003skx.3">
    <property type="organism name" value="human"/>
</dbReference>
<dbReference type="AGR" id="HGNC:22420"/>
<dbReference type="CTD" id="84262"/>
<dbReference type="DisGeNET" id="84262"/>
<dbReference type="GeneCards" id="PSMG3"/>
<dbReference type="HGNC" id="HGNC:22420">
    <property type="gene designation" value="PSMG3"/>
</dbReference>
<dbReference type="HPA" id="ENSG00000157778">
    <property type="expression patterns" value="Low tissue specificity"/>
</dbReference>
<dbReference type="MIM" id="617528">
    <property type="type" value="gene"/>
</dbReference>
<dbReference type="neXtProt" id="NX_Q9BT73"/>
<dbReference type="OpenTargets" id="ENSG00000157778"/>
<dbReference type="PharmGKB" id="PA162400247"/>
<dbReference type="VEuPathDB" id="HostDB:ENSG00000157778"/>
<dbReference type="eggNOG" id="KOG4828">
    <property type="taxonomic scope" value="Eukaryota"/>
</dbReference>
<dbReference type="GeneTree" id="ENSGT00390000000324"/>
<dbReference type="HOGENOM" id="CLU_133503_1_0_1"/>
<dbReference type="InParanoid" id="Q9BT73"/>
<dbReference type="OMA" id="IHVCAKN"/>
<dbReference type="OrthoDB" id="5839at2759"/>
<dbReference type="PAN-GO" id="Q9BT73">
    <property type="GO annotations" value="0 GO annotations based on evolutionary models"/>
</dbReference>
<dbReference type="PhylomeDB" id="Q9BT73"/>
<dbReference type="TreeFam" id="TF300294"/>
<dbReference type="PathwayCommons" id="Q9BT73"/>
<dbReference type="Reactome" id="R-HSA-9907900">
    <property type="pathway name" value="Proteasome assembly"/>
</dbReference>
<dbReference type="SignaLink" id="Q9BT73"/>
<dbReference type="BioGRID-ORCS" id="84262">
    <property type="hits" value="768 hits in 1155 CRISPR screens"/>
</dbReference>
<dbReference type="ChiTaRS" id="PSMG3">
    <property type="organism name" value="human"/>
</dbReference>
<dbReference type="EvolutionaryTrace" id="Q9BT73"/>
<dbReference type="GenomeRNAi" id="84262"/>
<dbReference type="Pharos" id="Q9BT73">
    <property type="development level" value="Tchem"/>
</dbReference>
<dbReference type="PRO" id="PR:Q9BT73"/>
<dbReference type="Proteomes" id="UP000005640">
    <property type="component" value="Chromosome 7"/>
</dbReference>
<dbReference type="RNAct" id="Q9BT73">
    <property type="molecule type" value="protein"/>
</dbReference>
<dbReference type="Bgee" id="ENSG00000157778">
    <property type="expression patterns" value="Expressed in mucosa of transverse colon and 179 other cell types or tissues"/>
</dbReference>
<dbReference type="ExpressionAtlas" id="Q9BT73">
    <property type="expression patterns" value="baseline and differential"/>
</dbReference>
<dbReference type="GO" id="GO:0005829">
    <property type="term" value="C:cytosol"/>
    <property type="evidence" value="ECO:0000304"/>
    <property type="project" value="Reactome"/>
</dbReference>
<dbReference type="GO" id="GO:0032991">
    <property type="term" value="C:protein-containing complex"/>
    <property type="evidence" value="ECO:0000250"/>
    <property type="project" value="UniProtKB"/>
</dbReference>
<dbReference type="GO" id="GO:0060090">
    <property type="term" value="F:molecular adaptor activity"/>
    <property type="evidence" value="ECO:0000315"/>
    <property type="project" value="UniProtKB"/>
</dbReference>
<dbReference type="GO" id="GO:0044877">
    <property type="term" value="F:protein-containing complex binding"/>
    <property type="evidence" value="ECO:0000314"/>
    <property type="project" value="UniProtKB"/>
</dbReference>
<dbReference type="GO" id="GO:0051131">
    <property type="term" value="P:chaperone-mediated protein complex assembly"/>
    <property type="evidence" value="ECO:0000315"/>
    <property type="project" value="UniProtKB"/>
</dbReference>
<dbReference type="GO" id="GO:0043248">
    <property type="term" value="P:proteasome assembly"/>
    <property type="evidence" value="ECO:0007669"/>
    <property type="project" value="InterPro"/>
</dbReference>
<dbReference type="Gene3D" id="3.30.230.90">
    <property type="match status" value="1"/>
</dbReference>
<dbReference type="InterPro" id="IPR018788">
    <property type="entry name" value="Proteasome_assmbl_chp_3"/>
</dbReference>
<dbReference type="InterPro" id="IPR053720">
    <property type="entry name" value="Psm_Assembly_Chaperone"/>
</dbReference>
<dbReference type="PANTHER" id="PTHR31051">
    <property type="entry name" value="PROTEASOME ASSEMBLY CHAPERONE 3"/>
    <property type="match status" value="1"/>
</dbReference>
<dbReference type="PANTHER" id="PTHR31051:SF1">
    <property type="entry name" value="PROTEASOME ASSEMBLY CHAPERONE 3"/>
    <property type="match status" value="1"/>
</dbReference>
<dbReference type="Pfam" id="PF10178">
    <property type="entry name" value="PAC3"/>
    <property type="match status" value="1"/>
</dbReference>
<comment type="function">
    <text evidence="1">Chaperone protein which promotes assembly of the 20S proteasome. May cooperate with PSMG1-PSMG2 heterodimers to orchestrate the correct assembly of proteasomes.</text>
</comment>
<comment type="subunit">
    <text evidence="1 2">Homodimer. Interacts with PSMG4. Interacts directly with alpha and beta subunits of the 20S proteasome but dissociates before the formation of half-proteasomes, probably upon recruitment of POMP.</text>
</comment>
<comment type="interaction">
    <interactant intactId="EBI-3921395">
        <id>Q9BT73</id>
    </interactant>
    <interactant intactId="EBI-10173129">
        <id>Q8NAJ2</id>
        <label>LINC02913</label>
    </interactant>
    <organismsDiffer>false</organismsDiffer>
    <experiments>2</experiments>
</comment>
<comment type="similarity">
    <text evidence="4">Belongs to the PSMG3 family.</text>
</comment>